<organism>
    <name type="scientific">Borreliella afzelii (strain PKo)</name>
    <name type="common">Borrelia afzelii</name>
    <dbReference type="NCBI Taxonomy" id="390236"/>
    <lineage>
        <taxon>Bacteria</taxon>
        <taxon>Pseudomonadati</taxon>
        <taxon>Spirochaetota</taxon>
        <taxon>Spirochaetia</taxon>
        <taxon>Spirochaetales</taxon>
        <taxon>Borreliaceae</taxon>
        <taxon>Borreliella</taxon>
    </lineage>
</organism>
<feature type="signal peptide" evidence="3">
    <location>
        <begin position="1"/>
        <end position="14"/>
    </location>
</feature>
<feature type="chain" id="PRO_0000018001" description="Basic membrane protein B">
    <location>
        <begin position="15"/>
        <end position="341"/>
    </location>
</feature>
<feature type="lipid moiety-binding region" description="N-palmitoyl cysteine" evidence="3">
    <location>
        <position position="15"/>
    </location>
</feature>
<feature type="lipid moiety-binding region" description="S-diacylglycerol cysteine" evidence="3">
    <location>
        <position position="15"/>
    </location>
</feature>
<feature type="sequence conflict" description="In Ref. 1; CAA57239." evidence="3" ref="1">
    <original>A</original>
    <variation>V</variation>
    <location>
        <position position="4"/>
    </location>
</feature>
<feature type="sequence conflict" description="In Ref. 1; CAA57239." evidence="3" ref="1">
    <original>A</original>
    <variation>P</variation>
    <location>
        <position position="234"/>
    </location>
</feature>
<evidence type="ECO:0000250" key="1">
    <source>
        <dbReference type="UniProtKB" id="P0CL55"/>
    </source>
</evidence>
<evidence type="ECO:0000250" key="2">
    <source>
        <dbReference type="UniProtKB" id="Q45011"/>
    </source>
</evidence>
<evidence type="ECO:0000305" key="3"/>
<proteinExistence type="inferred from homology"/>
<comment type="function">
    <text evidence="2">May be part of an ABC-type nucleoside uptake system involved in the purine salvage pathway.</text>
</comment>
<comment type="subunit">
    <text evidence="1">Monomer.</text>
</comment>
<comment type="subcellular location">
    <subcellularLocation>
        <location evidence="3">Cell inner membrane</location>
        <topology evidence="3">Lipid-anchor</topology>
    </subcellularLocation>
</comment>
<comment type="similarity">
    <text evidence="3">Belongs to the BMP lipoprotein family.</text>
</comment>
<accession>O31284</accession>
<accession>G0IS26</accession>
<accession>Q0SND1</accession>
<gene>
    <name type="primary">bmpB</name>
    <name type="ordered locus">BAPKO_0391</name>
    <name type="ordered locus">BafPKo_0381</name>
</gene>
<dbReference type="EMBL" id="X81519">
    <property type="protein sequence ID" value="CAA57239.1"/>
    <property type="molecule type" value="Genomic_DNA"/>
</dbReference>
<dbReference type="EMBL" id="CP000395">
    <property type="protein sequence ID" value="ABH01647.1"/>
    <property type="molecule type" value="Genomic_DNA"/>
</dbReference>
<dbReference type="EMBL" id="CP002933">
    <property type="protein sequence ID" value="AEL69607.1"/>
    <property type="molecule type" value="Genomic_DNA"/>
</dbReference>
<dbReference type="RefSeq" id="WP_004790248.1">
    <property type="nucleotide sequence ID" value="NZ_CP160066.1"/>
</dbReference>
<dbReference type="SMR" id="O31284"/>
<dbReference type="STRING" id="29518.BLA32_02405"/>
<dbReference type="GeneID" id="76831913"/>
<dbReference type="KEGG" id="baf:BAPKO_0391"/>
<dbReference type="KEGG" id="bafz:BafPKo_0381"/>
<dbReference type="PATRIC" id="fig|390236.22.peg.374"/>
<dbReference type="eggNOG" id="COG1744">
    <property type="taxonomic scope" value="Bacteria"/>
</dbReference>
<dbReference type="HOGENOM" id="CLU_038813_0_2_12"/>
<dbReference type="OrthoDB" id="9769871at2"/>
<dbReference type="Proteomes" id="UP000005216">
    <property type="component" value="Chromosome"/>
</dbReference>
<dbReference type="GO" id="GO:0005886">
    <property type="term" value="C:plasma membrane"/>
    <property type="evidence" value="ECO:0007669"/>
    <property type="project" value="UniProtKB-SubCell"/>
</dbReference>
<dbReference type="CDD" id="cd06354">
    <property type="entry name" value="PBP1_PrnA-like"/>
    <property type="match status" value="1"/>
</dbReference>
<dbReference type="Gene3D" id="3.40.50.2300">
    <property type="match status" value="2"/>
</dbReference>
<dbReference type="InterPro" id="IPR050957">
    <property type="entry name" value="BMP_lipoprotein"/>
</dbReference>
<dbReference type="InterPro" id="IPR028082">
    <property type="entry name" value="Peripla_BP_I"/>
</dbReference>
<dbReference type="InterPro" id="IPR003760">
    <property type="entry name" value="PnrA-like"/>
</dbReference>
<dbReference type="PANTHER" id="PTHR34296:SF2">
    <property type="entry name" value="ABC TRANSPORTER GUANOSINE-BINDING PROTEIN NUPN"/>
    <property type="match status" value="1"/>
</dbReference>
<dbReference type="PANTHER" id="PTHR34296">
    <property type="entry name" value="TRANSCRIPTIONAL ACTIVATOR PROTEIN MED"/>
    <property type="match status" value="1"/>
</dbReference>
<dbReference type="Pfam" id="PF02608">
    <property type="entry name" value="Bmp"/>
    <property type="match status" value="1"/>
</dbReference>
<dbReference type="SUPFAM" id="SSF53822">
    <property type="entry name" value="Periplasmic binding protein-like I"/>
    <property type="match status" value="1"/>
</dbReference>
<dbReference type="PROSITE" id="PS51257">
    <property type="entry name" value="PROKAR_LIPOPROTEIN"/>
    <property type="match status" value="1"/>
</dbReference>
<keyword id="KW-0997">Cell inner membrane</keyword>
<keyword id="KW-1003">Cell membrane</keyword>
<keyword id="KW-0449">Lipoprotein</keyword>
<keyword id="KW-0472">Membrane</keyword>
<keyword id="KW-0564">Palmitate</keyword>
<keyword id="KW-0732">Signal</keyword>
<keyword id="KW-0813">Transport</keyword>
<reference key="1">
    <citation type="journal article" date="1997" name="J. Clin. Microbiol.">
        <title>Heterogeneity of BmpA (P39) among European isolates of Borrelia burgdorferi sensu lato and influence of interspecies variability on serodiagnosis.</title>
        <authorList>
            <person name="Roessler D."/>
            <person name="Hauser U."/>
            <person name="Wilske B."/>
        </authorList>
    </citation>
    <scope>NUCLEOTIDE SEQUENCE [GENOMIC DNA]</scope>
</reference>
<reference key="2">
    <citation type="journal article" date="2006" name="BMC Genomics">
        <title>Comparative genome analysis: selection pressure on the Borrelia vls cassettes is essential for infectivity.</title>
        <authorList>
            <person name="Gloeckner G."/>
            <person name="Schulte-Spechtel U."/>
            <person name="Schilhabel M."/>
            <person name="Felder M."/>
            <person name="Suehnel J."/>
            <person name="Wilske B."/>
            <person name="Platzer M."/>
        </authorList>
    </citation>
    <scope>NUCLEOTIDE SEQUENCE [LARGE SCALE GENOMIC DNA]</scope>
    <source>
        <strain>PKo</strain>
    </source>
</reference>
<reference key="3">
    <citation type="journal article" date="2011" name="J. Bacteriol.">
        <title>Whole-genome sequences of two Borrelia afzelii and two Borrelia garinii Lyme disease agent isolates.</title>
        <authorList>
            <person name="Casjens S.R."/>
            <person name="Mongodin E.F."/>
            <person name="Qiu W.G."/>
            <person name="Dunn J.J."/>
            <person name="Luft B.J."/>
            <person name="Fraser-Liggett C.M."/>
            <person name="Schutzer S.E."/>
        </authorList>
    </citation>
    <scope>NUCLEOTIDE SEQUENCE [LARGE SCALE GENOMIC DNA]</scope>
    <source>
        <strain>PKo</strain>
    </source>
</reference>
<name>BMPB_BORAP</name>
<sequence length="341" mass="37145">MRIAIFIFGILLTSCFSKNGIESGSSKIKISMLVDGVLDDKSFNSSANEALLRLKKDFPENIEKVFSSAVSGVYSSYVSDLDNLKMNGSGLIWLVGYMLADVSLSVSLENPEINYGIIDPIYGDDVQIPKNLIGVVFRIEQGAFLAGYIAAKKSVSSKIGFIGGVKGDIVDAFRYGYEAGAKYANKGIEIVSEYSNSFSDIDIARVMANKMYSKGIDIIHFAAGLAGVGVIEAAKELGDGYYVIGADQDQSHLAPKNFITSVIKNVGDALYLITSESLKNDNVWEGGKIVQMGLRDGVVGLSNANEFEYIKDLERKIINKEIIVPCNQEGYEIFIKQILKL</sequence>
<protein>
    <recommendedName>
        <fullName>Basic membrane protein B</fullName>
    </recommendedName>
    <alternativeName>
        <fullName evidence="2">Probable substrate-binding protein BmpB</fullName>
    </alternativeName>
</protein>